<dbReference type="EC" id="1.14.14.48" evidence="5"/>
<dbReference type="EMBL" id="DQ201796">
    <property type="protein sequence ID" value="ABA61323.1"/>
    <property type="molecule type" value="mRNA"/>
</dbReference>
<dbReference type="EMBL" id="AB007649">
    <property type="protein sequence ID" value="BAB08810.1"/>
    <property type="molecule type" value="Genomic_DNA"/>
</dbReference>
<dbReference type="EMBL" id="CP002688">
    <property type="protein sequence ID" value="AED97750.1"/>
    <property type="molecule type" value="Genomic_DNA"/>
</dbReference>
<dbReference type="EMBL" id="AK118560">
    <property type="protein sequence ID" value="BAC43161.1"/>
    <property type="molecule type" value="mRNA"/>
</dbReference>
<dbReference type="EMBL" id="BT005906">
    <property type="protein sequence ID" value="AAO64841.1"/>
    <property type="molecule type" value="mRNA"/>
</dbReference>
<dbReference type="EMBL" id="AY084262">
    <property type="protein sequence ID" value="AAM60854.1"/>
    <property type="status" value="ALT_INIT"/>
    <property type="molecule type" value="mRNA"/>
</dbReference>
<dbReference type="RefSeq" id="NP_201150.1">
    <property type="nucleotide sequence ID" value="NM_125740.3"/>
</dbReference>
<dbReference type="SMR" id="Q9FMV7"/>
<dbReference type="BioGRID" id="21706">
    <property type="interactions" value="2"/>
</dbReference>
<dbReference type="FunCoup" id="Q9FMV7">
    <property type="interactions" value="220"/>
</dbReference>
<dbReference type="IntAct" id="Q9FMV7">
    <property type="interactions" value="1"/>
</dbReference>
<dbReference type="STRING" id="3702.Q9FMV7"/>
<dbReference type="PaxDb" id="3702-AT5G63450.1"/>
<dbReference type="ProteomicsDB" id="240273"/>
<dbReference type="EnsemblPlants" id="AT5G63450.1">
    <property type="protein sequence ID" value="AT5G63450.1"/>
    <property type="gene ID" value="AT5G63450"/>
</dbReference>
<dbReference type="GeneID" id="836464"/>
<dbReference type="Gramene" id="AT5G63450.1">
    <property type="protein sequence ID" value="AT5G63450.1"/>
    <property type="gene ID" value="AT5G63450"/>
</dbReference>
<dbReference type="KEGG" id="ath:AT5G63450"/>
<dbReference type="Araport" id="AT5G63450"/>
<dbReference type="TAIR" id="AT5G63450">
    <property type="gene designation" value="CYP94B1"/>
</dbReference>
<dbReference type="eggNOG" id="KOG0157">
    <property type="taxonomic scope" value="Eukaryota"/>
</dbReference>
<dbReference type="HOGENOM" id="CLU_001570_27_2_1"/>
<dbReference type="InParanoid" id="Q9FMV7"/>
<dbReference type="OMA" id="YLQHFIN"/>
<dbReference type="PhylomeDB" id="Q9FMV7"/>
<dbReference type="BioCyc" id="ARA:GQT-1370-MONOMER"/>
<dbReference type="BioCyc" id="MetaCyc:GQT-1370-MONOMER"/>
<dbReference type="BRENDA" id="1.14.14.48">
    <property type="organism ID" value="399"/>
</dbReference>
<dbReference type="PRO" id="PR:Q9FMV7"/>
<dbReference type="Proteomes" id="UP000006548">
    <property type="component" value="Chromosome 5"/>
</dbReference>
<dbReference type="ExpressionAtlas" id="Q9FMV7">
    <property type="expression patterns" value="baseline and differential"/>
</dbReference>
<dbReference type="GO" id="GO:0016020">
    <property type="term" value="C:membrane"/>
    <property type="evidence" value="ECO:0007669"/>
    <property type="project" value="UniProtKB-SubCell"/>
</dbReference>
<dbReference type="GO" id="GO:0020037">
    <property type="term" value="F:heme binding"/>
    <property type="evidence" value="ECO:0007669"/>
    <property type="project" value="InterPro"/>
</dbReference>
<dbReference type="GO" id="GO:0005506">
    <property type="term" value="F:iron ion binding"/>
    <property type="evidence" value="ECO:0007669"/>
    <property type="project" value="InterPro"/>
</dbReference>
<dbReference type="GO" id="GO:0052694">
    <property type="term" value="F:jasmonoyl-isoleucine-12-hydroxylase activity"/>
    <property type="evidence" value="ECO:0000314"/>
    <property type="project" value="UniProtKB"/>
</dbReference>
<dbReference type="GO" id="GO:0016705">
    <property type="term" value="F:oxidoreductase activity, acting on paired donors, with incorporation or reduction of molecular oxygen"/>
    <property type="evidence" value="ECO:0007669"/>
    <property type="project" value="InterPro"/>
</dbReference>
<dbReference type="GO" id="GO:0009694">
    <property type="term" value="P:jasmonic acid metabolic process"/>
    <property type="evidence" value="ECO:0000314"/>
    <property type="project" value="UniProtKB"/>
</dbReference>
<dbReference type="GO" id="GO:0009611">
    <property type="term" value="P:response to wounding"/>
    <property type="evidence" value="ECO:0000270"/>
    <property type="project" value="TAIR"/>
</dbReference>
<dbReference type="CDD" id="cd11064">
    <property type="entry name" value="CYP86A"/>
    <property type="match status" value="1"/>
</dbReference>
<dbReference type="FunFam" id="1.10.630.10:FF:000044">
    <property type="entry name" value="Cytochrome P450"/>
    <property type="match status" value="1"/>
</dbReference>
<dbReference type="Gene3D" id="1.10.630.10">
    <property type="entry name" value="Cytochrome P450"/>
    <property type="match status" value="1"/>
</dbReference>
<dbReference type="InterPro" id="IPR001128">
    <property type="entry name" value="Cyt_P450"/>
</dbReference>
<dbReference type="InterPro" id="IPR002401">
    <property type="entry name" value="Cyt_P450_E_grp-I"/>
</dbReference>
<dbReference type="InterPro" id="IPR036396">
    <property type="entry name" value="Cyt_P450_sf"/>
</dbReference>
<dbReference type="PANTHER" id="PTHR24296">
    <property type="entry name" value="CYTOCHROME P450"/>
    <property type="match status" value="1"/>
</dbReference>
<dbReference type="Pfam" id="PF00067">
    <property type="entry name" value="p450"/>
    <property type="match status" value="1"/>
</dbReference>
<dbReference type="PRINTS" id="PR00463">
    <property type="entry name" value="EP450I"/>
</dbReference>
<dbReference type="PRINTS" id="PR00385">
    <property type="entry name" value="P450"/>
</dbReference>
<dbReference type="SUPFAM" id="SSF48264">
    <property type="entry name" value="Cytochrome P450"/>
    <property type="match status" value="1"/>
</dbReference>
<protein>
    <recommendedName>
        <fullName evidence="8">Cytochrome P450 94B1</fullName>
        <ecNumber evidence="5">1.14.14.48</ecNumber>
    </recommendedName>
    <alternativeName>
        <fullName evidence="7">Jasmonoyl-L-amino acid 12-hydroxylase</fullName>
    </alternativeName>
</protein>
<comment type="function">
    <text evidence="5">Hydroxylase involved in the oxidation of the plant hormone jasmonoyl-L-isoleucine (JA-Ile), a bioactive phytohormone of the jasmonate-mediated signaling pathway. Converts JA-Ile to 12-hydroxy-JA-Ile.</text>
</comment>
<comment type="catalytic activity">
    <reaction evidence="5">
        <text>a jasmonyl-L-amino acid + reduced [NADPH--hemoprotein reductase] + O2 = a 12-hydroxyjasmonyl-L-alpha-amino acid + oxidized [NADPH--hemoprotein reductase] + H2O + H(+)</text>
        <dbReference type="Rhea" id="RHEA:54832"/>
        <dbReference type="Rhea" id="RHEA-COMP:11964"/>
        <dbReference type="Rhea" id="RHEA-COMP:11965"/>
        <dbReference type="ChEBI" id="CHEBI:15377"/>
        <dbReference type="ChEBI" id="CHEBI:15378"/>
        <dbReference type="ChEBI" id="CHEBI:15379"/>
        <dbReference type="ChEBI" id="CHEBI:57618"/>
        <dbReference type="ChEBI" id="CHEBI:58210"/>
        <dbReference type="ChEBI" id="CHEBI:136183"/>
        <dbReference type="ChEBI" id="CHEBI:138374"/>
        <dbReference type="EC" id="1.14.14.48"/>
    </reaction>
</comment>
<comment type="cofactor">
    <cofactor evidence="2">
        <name>heme</name>
        <dbReference type="ChEBI" id="CHEBI:30413"/>
    </cofactor>
</comment>
<comment type="subcellular location">
    <subcellularLocation>
        <location evidence="8">Membrane</location>
        <topology evidence="8">Single-pass membrane protein</topology>
    </subcellularLocation>
</comment>
<comment type="induction">
    <text evidence="4">Induced by wounding.</text>
</comment>
<comment type="miscellaneous">
    <text evidence="5">Plants overexpressing CYP94B1 are jasmonate insensitive and present developmental defects in all organs.</text>
</comment>
<comment type="similarity">
    <text evidence="8">Belongs to the cytochrome P450 family.</text>
</comment>
<comment type="sequence caution" evidence="8">
    <conflict type="erroneous initiation">
        <sequence resource="EMBL-CDS" id="AAM60854"/>
    </conflict>
    <text>Truncated N-terminus.</text>
</comment>
<accession>Q9FMV7</accession>
<accession>Q8GWY4</accession>
<accession>Q8LGH8</accession>
<evidence type="ECO:0000250" key="1"/>
<evidence type="ECO:0000250" key="2">
    <source>
        <dbReference type="UniProtKB" id="Q96242"/>
    </source>
</evidence>
<evidence type="ECO:0000255" key="3"/>
<evidence type="ECO:0000269" key="4">
    <source>
    </source>
</evidence>
<evidence type="ECO:0000269" key="5">
    <source>
    </source>
</evidence>
<evidence type="ECO:0000303" key="6">
    <source>
    </source>
</evidence>
<evidence type="ECO:0000303" key="7">
    <source>
    </source>
</evidence>
<evidence type="ECO:0000305" key="8"/>
<evidence type="ECO:0000312" key="9">
    <source>
        <dbReference type="Araport" id="AT5G63450"/>
    </source>
</evidence>
<evidence type="ECO:0000312" key="10">
    <source>
        <dbReference type="EMBL" id="BAB08810.1"/>
    </source>
</evidence>
<gene>
    <name evidence="6" type="primary">CYP94B1</name>
    <name evidence="9" type="ordered locus">At5g63450</name>
    <name evidence="10" type="ORF">MLE2.8</name>
</gene>
<name>C94B1_ARATH</name>
<feature type="chain" id="PRO_0000425852" description="Cytochrome P450 94B1">
    <location>
        <begin position="1"/>
        <end position="510"/>
    </location>
</feature>
<feature type="transmembrane region" description="Helical" evidence="3">
    <location>
        <begin position="3"/>
        <end position="23"/>
    </location>
</feature>
<feature type="binding site" description="axial binding residue" evidence="1">
    <location>
        <position position="450"/>
    </location>
    <ligand>
        <name>heme</name>
        <dbReference type="ChEBI" id="CHEBI:30413"/>
    </ligand>
    <ligandPart>
        <name>Fe</name>
        <dbReference type="ChEBI" id="CHEBI:18248"/>
    </ligandPart>
</feature>
<feature type="sequence conflict" description="In Ref. 6; AAM60854." evidence="8" ref="6">
    <location>
        <begin position="1"/>
        <end position="2"/>
    </location>
</feature>
<feature type="sequence conflict" description="In Ref. 6; AAM60854." evidence="8" ref="6">
    <original>TSYQ</original>
    <variation>ISYP</variation>
    <location>
        <begin position="39"/>
        <end position="42"/>
    </location>
</feature>
<feature type="sequence conflict" description="In Ref. 4; BAC43161 and 5; AAO64841." evidence="8" ref="4 5">
    <original>Y</original>
    <variation>D</variation>
    <location>
        <position position="462"/>
    </location>
</feature>
<keyword id="KW-0349">Heme</keyword>
<keyword id="KW-0408">Iron</keyword>
<keyword id="KW-1184">Jasmonic acid signaling pathway</keyword>
<keyword id="KW-0472">Membrane</keyword>
<keyword id="KW-0479">Metal-binding</keyword>
<keyword id="KW-0503">Monooxygenase</keyword>
<keyword id="KW-0560">Oxidoreductase</keyword>
<keyword id="KW-1185">Reference proteome</keyword>
<keyword id="KW-0812">Transmembrane</keyword>
<keyword id="KW-1133">Transmembrane helix</keyword>
<reference key="1">
    <citation type="submission" date="2005-09" db="EMBL/GenBank/DDBJ databases">
        <title>Arabidopsis CYP94B1 and CYP94C1: fatty acid hydroxylases induced by stress signaling molecules.</title>
        <authorList>
            <person name="Civjan N.R."/>
            <person name="Duan H."/>
            <person name="Schuler M.A."/>
        </authorList>
    </citation>
    <scope>NUCLEOTIDE SEQUENCE [MRNA]</scope>
</reference>
<reference key="2">
    <citation type="journal article" date="1997" name="DNA Res.">
        <title>Structural analysis of Arabidopsis thaliana chromosome 5. III. Sequence features of the regions of 1,191,918 bp covered by seventeen physically assigned P1 clones.</title>
        <authorList>
            <person name="Nakamura Y."/>
            <person name="Sato S."/>
            <person name="Kaneko T."/>
            <person name="Kotani H."/>
            <person name="Asamizu E."/>
            <person name="Miyajima N."/>
            <person name="Tabata S."/>
        </authorList>
    </citation>
    <scope>NUCLEOTIDE SEQUENCE [LARGE SCALE GENOMIC DNA]</scope>
    <source>
        <strain>cv. Columbia</strain>
    </source>
</reference>
<reference key="3">
    <citation type="journal article" date="2017" name="Plant J.">
        <title>Araport11: a complete reannotation of the Arabidopsis thaliana reference genome.</title>
        <authorList>
            <person name="Cheng C.Y."/>
            <person name="Krishnakumar V."/>
            <person name="Chan A.P."/>
            <person name="Thibaud-Nissen F."/>
            <person name="Schobel S."/>
            <person name="Town C.D."/>
        </authorList>
    </citation>
    <scope>GENOME REANNOTATION</scope>
    <source>
        <strain>cv. Columbia</strain>
    </source>
</reference>
<reference key="4">
    <citation type="journal article" date="2002" name="Science">
        <title>Functional annotation of a full-length Arabidopsis cDNA collection.</title>
        <authorList>
            <person name="Seki M."/>
            <person name="Narusaka M."/>
            <person name="Kamiya A."/>
            <person name="Ishida J."/>
            <person name="Satou M."/>
            <person name="Sakurai T."/>
            <person name="Nakajima M."/>
            <person name="Enju A."/>
            <person name="Akiyama K."/>
            <person name="Oono Y."/>
            <person name="Muramatsu M."/>
            <person name="Hayashizaki Y."/>
            <person name="Kawai J."/>
            <person name="Carninci P."/>
            <person name="Itoh M."/>
            <person name="Ishii Y."/>
            <person name="Arakawa T."/>
            <person name="Shibata K."/>
            <person name="Shinagawa A."/>
            <person name="Shinozaki K."/>
        </authorList>
    </citation>
    <scope>NUCLEOTIDE SEQUENCE [LARGE SCALE MRNA]</scope>
    <source>
        <strain>cv. Columbia</strain>
    </source>
</reference>
<reference key="5">
    <citation type="journal article" date="2003" name="Science">
        <title>Empirical analysis of transcriptional activity in the Arabidopsis genome.</title>
        <authorList>
            <person name="Yamada K."/>
            <person name="Lim J."/>
            <person name="Dale J.M."/>
            <person name="Chen H."/>
            <person name="Shinn P."/>
            <person name="Palm C.J."/>
            <person name="Southwick A.M."/>
            <person name="Wu H.C."/>
            <person name="Kim C.J."/>
            <person name="Nguyen M."/>
            <person name="Pham P.K."/>
            <person name="Cheuk R.F."/>
            <person name="Karlin-Newmann G."/>
            <person name="Liu S.X."/>
            <person name="Lam B."/>
            <person name="Sakano H."/>
            <person name="Wu T."/>
            <person name="Yu G."/>
            <person name="Miranda M."/>
            <person name="Quach H.L."/>
            <person name="Tripp M."/>
            <person name="Chang C.H."/>
            <person name="Lee J.M."/>
            <person name="Toriumi M.J."/>
            <person name="Chan M.M."/>
            <person name="Tang C.C."/>
            <person name="Onodera C.S."/>
            <person name="Deng J.M."/>
            <person name="Akiyama K."/>
            <person name="Ansari Y."/>
            <person name="Arakawa T."/>
            <person name="Banh J."/>
            <person name="Banno F."/>
            <person name="Bowser L."/>
            <person name="Brooks S.Y."/>
            <person name="Carninci P."/>
            <person name="Chao Q."/>
            <person name="Choy N."/>
            <person name="Enju A."/>
            <person name="Goldsmith A.D."/>
            <person name="Gurjal M."/>
            <person name="Hansen N.F."/>
            <person name="Hayashizaki Y."/>
            <person name="Johnson-Hopson C."/>
            <person name="Hsuan V.W."/>
            <person name="Iida K."/>
            <person name="Karnes M."/>
            <person name="Khan S."/>
            <person name="Koesema E."/>
            <person name="Ishida J."/>
            <person name="Jiang P.X."/>
            <person name="Jones T."/>
            <person name="Kawai J."/>
            <person name="Kamiya A."/>
            <person name="Meyers C."/>
            <person name="Nakajima M."/>
            <person name="Narusaka M."/>
            <person name="Seki M."/>
            <person name="Sakurai T."/>
            <person name="Satou M."/>
            <person name="Tamse R."/>
            <person name="Vaysberg M."/>
            <person name="Wallender E.K."/>
            <person name="Wong C."/>
            <person name="Yamamura Y."/>
            <person name="Yuan S."/>
            <person name="Shinozaki K."/>
            <person name="Davis R.W."/>
            <person name="Theologis A."/>
            <person name="Ecker J.R."/>
        </authorList>
    </citation>
    <scope>NUCLEOTIDE SEQUENCE [LARGE SCALE MRNA]</scope>
    <source>
        <strain>cv. Columbia</strain>
    </source>
</reference>
<reference key="6">
    <citation type="submission" date="2002-03" db="EMBL/GenBank/DDBJ databases">
        <title>Full-length cDNA from Arabidopsis thaliana.</title>
        <authorList>
            <person name="Brover V.V."/>
            <person name="Troukhan M.E."/>
            <person name="Alexandrov N.A."/>
            <person name="Lu Y.-P."/>
            <person name="Flavell R.B."/>
            <person name="Feldmann K.A."/>
        </authorList>
    </citation>
    <scope>NUCLEOTIDE SEQUENCE [LARGE SCALE MRNA]</scope>
</reference>
<reference key="7">
    <citation type="journal article" date="2011" name="Proc. Natl. Acad. Sci. U.S.A.">
        <title>Cytochrome P450 CYP94B3 mediates catabolism and inactivation of the plant hormone jasmonoyl-L-isoleucine.</title>
        <authorList>
            <person name="Koo A.J."/>
            <person name="Cooke T.F."/>
            <person name="Howe G.A."/>
        </authorList>
    </citation>
    <scope>INDUCTION BY WOUNDING</scope>
</reference>
<reference key="8">
    <citation type="journal article" date="2014" name="J. Biol. Chem.">
        <title>Endoplasmic reticulum-associated inactivation of the hormone jasmonoyl-L-isoleucine by multiple members of the cytochrome P450 94 family in Arabidopsis.</title>
        <authorList>
            <person name="Koo A.J."/>
            <person name="Thireault C."/>
            <person name="Zemelis S."/>
            <person name="Poudel A.N."/>
            <person name="Zhang T."/>
            <person name="Kitaoka N."/>
            <person name="Brandizzi F."/>
            <person name="Matsuura H."/>
            <person name="Howe G.A."/>
        </authorList>
    </citation>
    <scope>FUNCTION</scope>
    <scope>CATALYTIC ACTIVITY</scope>
</reference>
<sequence>MEMLNAIILILFPIIGFVLIFSFPTKTLKAKTASPSNPTSYQLIGSILSFNKNRHRLLQWYTDLLRLSPSQTITVDLLFGRRTIITANPENVEHILKTNFYNFPKGKPFTDLLGDLLGGGIFNSDGELWSSQRKLASHEFTMRSLREFTFEILREEVQNRLIPVLSSAVDCGETVDFQEVLKRFAFDVVCKVSLGWDPDCLDLTRPVPELVKAFDVAAEISARRATEPVYAVWKVKRFLNVGSEKRLREAIKTVHLSVSEIIRAKKKSLDIGGDVSDKQDLLSRFLAAGHGEEAVRDSVISFIMAGRDTTSAAMTWLFWLLSQNDDVETKILDELRNKGSLGLGFEDLREMSYTKACLCEAMRLYPPVAWDSKHAANDDILPDGTPLKKGDKVTYFPYGMGRMEKVWGKDWDEFKPNRWFEEEPSYGTKPVLKSVSSFKFPVFQAGPRVCIGKEMAFTQMKYVVGSVLSRFKIIPVCNNRPVFVPLLTAHMAGGLKVKIKRREQCDSMYI</sequence>
<organism>
    <name type="scientific">Arabidopsis thaliana</name>
    <name type="common">Mouse-ear cress</name>
    <dbReference type="NCBI Taxonomy" id="3702"/>
    <lineage>
        <taxon>Eukaryota</taxon>
        <taxon>Viridiplantae</taxon>
        <taxon>Streptophyta</taxon>
        <taxon>Embryophyta</taxon>
        <taxon>Tracheophyta</taxon>
        <taxon>Spermatophyta</taxon>
        <taxon>Magnoliopsida</taxon>
        <taxon>eudicotyledons</taxon>
        <taxon>Gunneridae</taxon>
        <taxon>Pentapetalae</taxon>
        <taxon>rosids</taxon>
        <taxon>malvids</taxon>
        <taxon>Brassicales</taxon>
        <taxon>Brassicaceae</taxon>
        <taxon>Camelineae</taxon>
        <taxon>Arabidopsis</taxon>
    </lineage>
</organism>
<proteinExistence type="evidence at protein level"/>